<evidence type="ECO:0000255" key="1">
    <source>
        <dbReference type="HAMAP-Rule" id="MF_00003"/>
    </source>
</evidence>
<dbReference type="EMBL" id="CP000034">
    <property type="protein sequence ID" value="ABB63339.1"/>
    <property type="molecule type" value="Genomic_DNA"/>
</dbReference>
<dbReference type="RefSeq" id="WP_001040205.1">
    <property type="nucleotide sequence ID" value="NC_007606.1"/>
</dbReference>
<dbReference type="RefSeq" id="YP_404830.1">
    <property type="nucleotide sequence ID" value="NC_007606.1"/>
</dbReference>
<dbReference type="SMR" id="Q32BG6"/>
<dbReference type="STRING" id="300267.SDY_3346"/>
<dbReference type="EnsemblBacteria" id="ABB63339">
    <property type="protein sequence ID" value="ABB63339"/>
    <property type="gene ID" value="SDY_3346"/>
</dbReference>
<dbReference type="GeneID" id="93778816"/>
<dbReference type="KEGG" id="sdy:SDY_3346"/>
<dbReference type="PATRIC" id="fig|300267.13.peg.4000"/>
<dbReference type="HOGENOM" id="CLU_089475_5_0_6"/>
<dbReference type="Proteomes" id="UP000002716">
    <property type="component" value="Chromosome"/>
</dbReference>
<dbReference type="GO" id="GO:0005829">
    <property type="term" value="C:cytosol"/>
    <property type="evidence" value="ECO:0007669"/>
    <property type="project" value="TreeGrafter"/>
</dbReference>
<dbReference type="GO" id="GO:0043024">
    <property type="term" value="F:ribosomal small subunit binding"/>
    <property type="evidence" value="ECO:0007669"/>
    <property type="project" value="TreeGrafter"/>
</dbReference>
<dbReference type="GO" id="GO:0030490">
    <property type="term" value="P:maturation of SSU-rRNA"/>
    <property type="evidence" value="ECO:0007669"/>
    <property type="project" value="UniProtKB-UniRule"/>
</dbReference>
<dbReference type="FunFam" id="3.30.300.20:FF:000007">
    <property type="entry name" value="Ribosome-binding factor A"/>
    <property type="match status" value="1"/>
</dbReference>
<dbReference type="Gene3D" id="3.30.300.20">
    <property type="match status" value="1"/>
</dbReference>
<dbReference type="HAMAP" id="MF_00003">
    <property type="entry name" value="RbfA"/>
    <property type="match status" value="1"/>
</dbReference>
<dbReference type="InterPro" id="IPR015946">
    <property type="entry name" value="KH_dom-like_a/b"/>
</dbReference>
<dbReference type="InterPro" id="IPR000238">
    <property type="entry name" value="RbfA"/>
</dbReference>
<dbReference type="InterPro" id="IPR023799">
    <property type="entry name" value="RbfA_dom_sf"/>
</dbReference>
<dbReference type="InterPro" id="IPR020053">
    <property type="entry name" value="Ribosome-bd_factorA_CS"/>
</dbReference>
<dbReference type="NCBIfam" id="TIGR00082">
    <property type="entry name" value="rbfA"/>
    <property type="match status" value="1"/>
</dbReference>
<dbReference type="PANTHER" id="PTHR33515">
    <property type="entry name" value="RIBOSOME-BINDING FACTOR A, CHLOROPLASTIC-RELATED"/>
    <property type="match status" value="1"/>
</dbReference>
<dbReference type="PANTHER" id="PTHR33515:SF1">
    <property type="entry name" value="RIBOSOME-BINDING FACTOR A, CHLOROPLASTIC-RELATED"/>
    <property type="match status" value="1"/>
</dbReference>
<dbReference type="Pfam" id="PF02033">
    <property type="entry name" value="RBFA"/>
    <property type="match status" value="1"/>
</dbReference>
<dbReference type="SUPFAM" id="SSF89919">
    <property type="entry name" value="Ribosome-binding factor A, RbfA"/>
    <property type="match status" value="1"/>
</dbReference>
<dbReference type="PROSITE" id="PS01319">
    <property type="entry name" value="RBFA"/>
    <property type="match status" value="1"/>
</dbReference>
<protein>
    <recommendedName>
        <fullName evidence="1">Ribosome-binding factor A</fullName>
    </recommendedName>
</protein>
<keyword id="KW-0963">Cytoplasm</keyword>
<keyword id="KW-1185">Reference proteome</keyword>
<keyword id="KW-0690">Ribosome biogenesis</keyword>
<reference key="1">
    <citation type="journal article" date="2005" name="Nucleic Acids Res.">
        <title>Genome dynamics and diversity of Shigella species, the etiologic agents of bacillary dysentery.</title>
        <authorList>
            <person name="Yang F."/>
            <person name="Yang J."/>
            <person name="Zhang X."/>
            <person name="Chen L."/>
            <person name="Jiang Y."/>
            <person name="Yan Y."/>
            <person name="Tang X."/>
            <person name="Wang J."/>
            <person name="Xiong Z."/>
            <person name="Dong J."/>
            <person name="Xue Y."/>
            <person name="Zhu Y."/>
            <person name="Xu X."/>
            <person name="Sun L."/>
            <person name="Chen S."/>
            <person name="Nie H."/>
            <person name="Peng J."/>
            <person name="Xu J."/>
            <person name="Wang Y."/>
            <person name="Yuan Z."/>
            <person name="Wen Y."/>
            <person name="Yao Z."/>
            <person name="Shen Y."/>
            <person name="Qiang B."/>
            <person name="Hou Y."/>
            <person name="Yu J."/>
            <person name="Jin Q."/>
        </authorList>
    </citation>
    <scope>NUCLEOTIDE SEQUENCE [LARGE SCALE GENOMIC DNA]</scope>
    <source>
        <strain>Sd197</strain>
    </source>
</reference>
<proteinExistence type="inferred from homology"/>
<accession>Q32BG6</accession>
<sequence length="133" mass="15154">MAKEFGRPQRVAQEMQKEIALILQREIKDPRLGMMTTVSGVEMSRDLAYAKVYVTFLNDKDEDAVKAGIKALQEASGFIRSLLGKAMRLRIVPELTFFYDNSLVEGMRMSNLVTSVVKHDEERRVNPDDSKED</sequence>
<gene>
    <name evidence="1" type="primary">rbfA</name>
    <name type="ordered locus">SDY_3346</name>
</gene>
<organism>
    <name type="scientific">Shigella dysenteriae serotype 1 (strain Sd197)</name>
    <dbReference type="NCBI Taxonomy" id="300267"/>
    <lineage>
        <taxon>Bacteria</taxon>
        <taxon>Pseudomonadati</taxon>
        <taxon>Pseudomonadota</taxon>
        <taxon>Gammaproteobacteria</taxon>
        <taxon>Enterobacterales</taxon>
        <taxon>Enterobacteriaceae</taxon>
        <taxon>Shigella</taxon>
    </lineage>
</organism>
<feature type="chain" id="PRO_1000000210" description="Ribosome-binding factor A">
    <location>
        <begin position="1"/>
        <end position="133"/>
    </location>
</feature>
<comment type="function">
    <text evidence="1">One of several proteins that assist in the late maturation steps of the functional core of the 30S ribosomal subunit. Associates with free 30S ribosomal subunits (but not with 30S subunits that are part of 70S ribosomes or polysomes). Required for efficient processing of 16S rRNA. May interact with the 5'-terminal helix region of 16S rRNA.</text>
</comment>
<comment type="subunit">
    <text evidence="1">Monomer. Binds 30S ribosomal subunits, but not 50S ribosomal subunits or 70S ribosomes.</text>
</comment>
<comment type="subcellular location">
    <subcellularLocation>
        <location evidence="1">Cytoplasm</location>
    </subcellularLocation>
</comment>
<comment type="similarity">
    <text evidence="1">Belongs to the RbfA family.</text>
</comment>
<name>RBFA_SHIDS</name>